<dbReference type="EC" id="6.1.1.23" evidence="1"/>
<dbReference type="EMBL" id="AE000520">
    <property type="protein sequence ID" value="AAC65942.1"/>
    <property type="molecule type" value="Genomic_DNA"/>
</dbReference>
<dbReference type="PIR" id="A71256">
    <property type="entry name" value="A71256"/>
</dbReference>
<dbReference type="SMR" id="O83950"/>
<dbReference type="IntAct" id="O83950">
    <property type="interactions" value="25"/>
</dbReference>
<dbReference type="STRING" id="243276.TP_0985"/>
<dbReference type="EnsemblBacteria" id="AAC65942">
    <property type="protein sequence ID" value="AAC65942"/>
    <property type="gene ID" value="TP_0985"/>
</dbReference>
<dbReference type="KEGG" id="tpa:TP_0985"/>
<dbReference type="KEGG" id="tpw:TPANIC_0985"/>
<dbReference type="eggNOG" id="COG0173">
    <property type="taxonomic scope" value="Bacteria"/>
</dbReference>
<dbReference type="HOGENOM" id="CLU_014330_3_2_12"/>
<dbReference type="Proteomes" id="UP000000811">
    <property type="component" value="Chromosome"/>
</dbReference>
<dbReference type="GO" id="GO:0005737">
    <property type="term" value="C:cytoplasm"/>
    <property type="evidence" value="ECO:0007669"/>
    <property type="project" value="UniProtKB-SubCell"/>
</dbReference>
<dbReference type="GO" id="GO:0004815">
    <property type="term" value="F:aspartate-tRNA ligase activity"/>
    <property type="evidence" value="ECO:0007669"/>
    <property type="project" value="UniProtKB-UniRule"/>
</dbReference>
<dbReference type="GO" id="GO:0050560">
    <property type="term" value="F:aspartate-tRNA(Asn) ligase activity"/>
    <property type="evidence" value="ECO:0007669"/>
    <property type="project" value="UniProtKB-EC"/>
</dbReference>
<dbReference type="GO" id="GO:0005524">
    <property type="term" value="F:ATP binding"/>
    <property type="evidence" value="ECO:0007669"/>
    <property type="project" value="UniProtKB-UniRule"/>
</dbReference>
<dbReference type="GO" id="GO:0003676">
    <property type="term" value="F:nucleic acid binding"/>
    <property type="evidence" value="ECO:0007669"/>
    <property type="project" value="InterPro"/>
</dbReference>
<dbReference type="GO" id="GO:0006422">
    <property type="term" value="P:aspartyl-tRNA aminoacylation"/>
    <property type="evidence" value="ECO:0007669"/>
    <property type="project" value="UniProtKB-UniRule"/>
</dbReference>
<dbReference type="CDD" id="cd00777">
    <property type="entry name" value="AspRS_core"/>
    <property type="match status" value="1"/>
</dbReference>
<dbReference type="CDD" id="cd04317">
    <property type="entry name" value="EcAspRS_like_N"/>
    <property type="match status" value="1"/>
</dbReference>
<dbReference type="Gene3D" id="3.30.930.10">
    <property type="entry name" value="Bira Bifunctional Protein, Domain 2"/>
    <property type="match status" value="1"/>
</dbReference>
<dbReference type="Gene3D" id="3.30.1360.30">
    <property type="entry name" value="GAD-like domain"/>
    <property type="match status" value="1"/>
</dbReference>
<dbReference type="Gene3D" id="2.40.50.140">
    <property type="entry name" value="Nucleic acid-binding proteins"/>
    <property type="match status" value="1"/>
</dbReference>
<dbReference type="HAMAP" id="MF_00044">
    <property type="entry name" value="Asp_tRNA_synth_type1"/>
    <property type="match status" value="1"/>
</dbReference>
<dbReference type="InterPro" id="IPR004364">
    <property type="entry name" value="Aa-tRNA-synt_II"/>
</dbReference>
<dbReference type="InterPro" id="IPR006195">
    <property type="entry name" value="aa-tRNA-synth_II"/>
</dbReference>
<dbReference type="InterPro" id="IPR045864">
    <property type="entry name" value="aa-tRNA-synth_II/BPL/LPL"/>
</dbReference>
<dbReference type="InterPro" id="IPR004524">
    <property type="entry name" value="Asp-tRNA-ligase_1"/>
</dbReference>
<dbReference type="InterPro" id="IPR047089">
    <property type="entry name" value="Asp-tRNA-ligase_1_N"/>
</dbReference>
<dbReference type="InterPro" id="IPR002312">
    <property type="entry name" value="Asp/Asn-tRNA-synth_IIb"/>
</dbReference>
<dbReference type="InterPro" id="IPR047090">
    <property type="entry name" value="AspRS_core"/>
</dbReference>
<dbReference type="InterPro" id="IPR004115">
    <property type="entry name" value="GAD-like_sf"/>
</dbReference>
<dbReference type="InterPro" id="IPR029351">
    <property type="entry name" value="GAD_dom"/>
</dbReference>
<dbReference type="InterPro" id="IPR012340">
    <property type="entry name" value="NA-bd_OB-fold"/>
</dbReference>
<dbReference type="InterPro" id="IPR004365">
    <property type="entry name" value="NA-bd_OB_tRNA"/>
</dbReference>
<dbReference type="NCBIfam" id="TIGR00459">
    <property type="entry name" value="aspS_bact"/>
    <property type="match status" value="1"/>
</dbReference>
<dbReference type="NCBIfam" id="NF001750">
    <property type="entry name" value="PRK00476.1"/>
    <property type="match status" value="1"/>
</dbReference>
<dbReference type="PANTHER" id="PTHR22594:SF5">
    <property type="entry name" value="ASPARTATE--TRNA LIGASE, MITOCHONDRIAL"/>
    <property type="match status" value="1"/>
</dbReference>
<dbReference type="PANTHER" id="PTHR22594">
    <property type="entry name" value="ASPARTYL/LYSYL-TRNA SYNTHETASE"/>
    <property type="match status" value="1"/>
</dbReference>
<dbReference type="Pfam" id="PF02938">
    <property type="entry name" value="GAD"/>
    <property type="match status" value="1"/>
</dbReference>
<dbReference type="Pfam" id="PF00152">
    <property type="entry name" value="tRNA-synt_2"/>
    <property type="match status" value="1"/>
</dbReference>
<dbReference type="Pfam" id="PF01336">
    <property type="entry name" value="tRNA_anti-codon"/>
    <property type="match status" value="1"/>
</dbReference>
<dbReference type="PRINTS" id="PR01042">
    <property type="entry name" value="TRNASYNTHASP"/>
</dbReference>
<dbReference type="SUPFAM" id="SSF55681">
    <property type="entry name" value="Class II aaRS and biotin synthetases"/>
    <property type="match status" value="1"/>
</dbReference>
<dbReference type="SUPFAM" id="SSF55261">
    <property type="entry name" value="GAD domain-like"/>
    <property type="match status" value="1"/>
</dbReference>
<dbReference type="SUPFAM" id="SSF50249">
    <property type="entry name" value="Nucleic acid-binding proteins"/>
    <property type="match status" value="1"/>
</dbReference>
<dbReference type="PROSITE" id="PS50862">
    <property type="entry name" value="AA_TRNA_LIGASE_II"/>
    <property type="match status" value="1"/>
</dbReference>
<gene>
    <name evidence="1" type="primary">aspS</name>
    <name type="ordered locus">TP_0985</name>
</gene>
<protein>
    <recommendedName>
        <fullName evidence="1">Aspartate--tRNA(Asp/Asn) ligase</fullName>
        <ecNumber evidence="1">6.1.1.23</ecNumber>
    </recommendedName>
    <alternativeName>
        <fullName evidence="1">Aspartyl-tRNA synthetase</fullName>
        <shortName evidence="1">AspRS</shortName>
    </alternativeName>
    <alternativeName>
        <fullName evidence="1">Non-discriminating aspartyl-tRNA synthetase</fullName>
        <shortName evidence="1">ND-AspRS</shortName>
    </alternativeName>
</protein>
<organism>
    <name type="scientific">Treponema pallidum (strain Nichols)</name>
    <dbReference type="NCBI Taxonomy" id="243276"/>
    <lineage>
        <taxon>Bacteria</taxon>
        <taxon>Pseudomonadati</taxon>
        <taxon>Spirochaetota</taxon>
        <taxon>Spirochaetia</taxon>
        <taxon>Spirochaetales</taxon>
        <taxon>Treponemataceae</taxon>
        <taxon>Treponema</taxon>
    </lineage>
</organism>
<sequence>MYSAHTPWYDGQVMDYPRRTIACGELRRCHVGTVVVLNGWVHRKRSHGTVSFFNMRDRSGIVQVIVSQEENASLWSTVNRIRLECCLAVEGVVRERPPSMINRALHTGEVEVHARTLYVLSENAVLPFRVDDVVHAHEDIRLKYRYLDLRSQRMQERIALRSRVALAIRQFLSMKGFIEIETPTFICSTPEGARDFVVPSRVCPGRFYALPQSPQLYKQLLMVAGFDRYFQLARCYRDEDARGDRQPEFTQIDLEMSFVSRDDVMRVNEDMLRYVFRTSIGVELPTFFPRLTYAQALDQYGTDKPDMRFKPVLQNADFMGMLGTFTPFEEVVAQGGSIRALVLPGKARCYSRRQIEALESIARAHEAHHLFWLKATGGGLEGGIARFFAGVESEVRRRLSAQDEDLLLFVADCRHRVCCVALGAVRSALIRDESFPEKELFSFVWIVDFPLFEWNPAENKWDPAHHMFSAPQEQYLETLEQDPGSVKGDLYDLVLNGYELASGSIRIHDTQLQKRIFKIVGLDPEEAGEKFGFLTEAFKYGAPPHGGIAHGLDRLVMLMTGSESIRDVIAFPKNTLAASPLDNCPSVLDKRQLDELHLTVHV</sequence>
<name>SYDND_TREPA</name>
<feature type="chain" id="PRO_0000110974" description="Aspartate--tRNA(Asp/Asn) ligase">
    <location>
        <begin position="1"/>
        <end position="602"/>
    </location>
</feature>
<feature type="region of interest" description="Aspartate" evidence="1">
    <location>
        <begin position="215"/>
        <end position="218"/>
    </location>
</feature>
<feature type="binding site" evidence="1">
    <location>
        <position position="191"/>
    </location>
    <ligand>
        <name>L-aspartate</name>
        <dbReference type="ChEBI" id="CHEBI:29991"/>
    </ligand>
</feature>
<feature type="binding site" evidence="1">
    <location>
        <begin position="237"/>
        <end position="239"/>
    </location>
    <ligand>
        <name>ATP</name>
        <dbReference type="ChEBI" id="CHEBI:30616"/>
    </ligand>
</feature>
<feature type="binding site" evidence="1">
    <location>
        <position position="237"/>
    </location>
    <ligand>
        <name>L-aspartate</name>
        <dbReference type="ChEBI" id="CHEBI:29991"/>
    </ligand>
</feature>
<feature type="binding site" evidence="1">
    <location>
        <position position="246"/>
    </location>
    <ligand>
        <name>ATP</name>
        <dbReference type="ChEBI" id="CHEBI:30616"/>
    </ligand>
</feature>
<feature type="binding site" evidence="1">
    <location>
        <position position="465"/>
    </location>
    <ligand>
        <name>L-aspartate</name>
        <dbReference type="ChEBI" id="CHEBI:29991"/>
    </ligand>
</feature>
<feature type="binding site" evidence="1">
    <location>
        <position position="499"/>
    </location>
    <ligand>
        <name>ATP</name>
        <dbReference type="ChEBI" id="CHEBI:30616"/>
    </ligand>
</feature>
<feature type="binding site" evidence="1">
    <location>
        <position position="506"/>
    </location>
    <ligand>
        <name>L-aspartate</name>
        <dbReference type="ChEBI" id="CHEBI:29991"/>
    </ligand>
</feature>
<feature type="binding site" evidence="1">
    <location>
        <begin position="551"/>
        <end position="554"/>
    </location>
    <ligand>
        <name>ATP</name>
        <dbReference type="ChEBI" id="CHEBI:30616"/>
    </ligand>
</feature>
<feature type="site" description="Important for tRNA non-discrimination" evidence="1">
    <location>
        <position position="47"/>
    </location>
</feature>
<evidence type="ECO:0000255" key="1">
    <source>
        <dbReference type="HAMAP-Rule" id="MF_00044"/>
    </source>
</evidence>
<reference key="1">
    <citation type="journal article" date="1998" name="Science">
        <title>Complete genome sequence of Treponema pallidum, the syphilis spirochete.</title>
        <authorList>
            <person name="Fraser C.M."/>
            <person name="Norris S.J."/>
            <person name="Weinstock G.M."/>
            <person name="White O."/>
            <person name="Sutton G.G."/>
            <person name="Dodson R.J."/>
            <person name="Gwinn M.L."/>
            <person name="Hickey E.K."/>
            <person name="Clayton R.A."/>
            <person name="Ketchum K.A."/>
            <person name="Sodergren E."/>
            <person name="Hardham J.M."/>
            <person name="McLeod M.P."/>
            <person name="Salzberg S.L."/>
            <person name="Peterson J.D."/>
            <person name="Khalak H.G."/>
            <person name="Richardson D.L."/>
            <person name="Howell J.K."/>
            <person name="Chidambaram M."/>
            <person name="Utterback T.R."/>
            <person name="McDonald L.A."/>
            <person name="Artiach P."/>
            <person name="Bowman C."/>
            <person name="Cotton M.D."/>
            <person name="Fujii C."/>
            <person name="Garland S.A."/>
            <person name="Hatch B."/>
            <person name="Horst K."/>
            <person name="Roberts K.M."/>
            <person name="Sandusky M."/>
            <person name="Weidman J.F."/>
            <person name="Smith H.O."/>
            <person name="Venter J.C."/>
        </authorList>
    </citation>
    <scope>NUCLEOTIDE SEQUENCE [LARGE SCALE GENOMIC DNA]</scope>
    <source>
        <strain>Nichols</strain>
    </source>
</reference>
<proteinExistence type="inferred from homology"/>
<comment type="function">
    <text evidence="1">Aspartyl-tRNA synthetase with relaxed tRNA specificity since it is able to aspartylate not only its cognate tRNA(Asp) but also tRNA(Asn). Reaction proceeds in two steps: L-aspartate is first activated by ATP to form Asp-AMP and then transferred to the acceptor end of tRNA(Asp/Asn).</text>
</comment>
<comment type="catalytic activity">
    <reaction evidence="1">
        <text>tRNA(Asx) + L-aspartate + ATP = L-aspartyl-tRNA(Asx) + AMP + diphosphate</text>
        <dbReference type="Rhea" id="RHEA:18349"/>
        <dbReference type="Rhea" id="RHEA-COMP:9710"/>
        <dbReference type="Rhea" id="RHEA-COMP:9711"/>
        <dbReference type="ChEBI" id="CHEBI:29991"/>
        <dbReference type="ChEBI" id="CHEBI:30616"/>
        <dbReference type="ChEBI" id="CHEBI:33019"/>
        <dbReference type="ChEBI" id="CHEBI:78442"/>
        <dbReference type="ChEBI" id="CHEBI:78516"/>
        <dbReference type="ChEBI" id="CHEBI:456215"/>
        <dbReference type="EC" id="6.1.1.23"/>
    </reaction>
</comment>
<comment type="subunit">
    <text evidence="1">Homodimer.</text>
</comment>
<comment type="subcellular location">
    <subcellularLocation>
        <location evidence="1">Cytoplasm</location>
    </subcellularLocation>
</comment>
<comment type="similarity">
    <text evidence="1">Belongs to the class-II aminoacyl-tRNA synthetase family. Type 1 subfamily.</text>
</comment>
<accession>O83950</accession>
<keyword id="KW-0030">Aminoacyl-tRNA synthetase</keyword>
<keyword id="KW-0067">ATP-binding</keyword>
<keyword id="KW-0963">Cytoplasm</keyword>
<keyword id="KW-0436">Ligase</keyword>
<keyword id="KW-0547">Nucleotide-binding</keyword>
<keyword id="KW-0648">Protein biosynthesis</keyword>
<keyword id="KW-1185">Reference proteome</keyword>